<accession>Q0DKP4</accession>
<accession>Q5WN06</accession>
<organism>
    <name type="scientific">Oryza sativa subsp. japonica</name>
    <name type="common">Rice</name>
    <dbReference type="NCBI Taxonomy" id="39947"/>
    <lineage>
        <taxon>Eukaryota</taxon>
        <taxon>Viridiplantae</taxon>
        <taxon>Streptophyta</taxon>
        <taxon>Embryophyta</taxon>
        <taxon>Tracheophyta</taxon>
        <taxon>Spermatophyta</taxon>
        <taxon>Magnoliopsida</taxon>
        <taxon>Liliopsida</taxon>
        <taxon>Poales</taxon>
        <taxon>Poaceae</taxon>
        <taxon>BOP clade</taxon>
        <taxon>Oryzoideae</taxon>
        <taxon>Oryzeae</taxon>
        <taxon>Oryzinae</taxon>
        <taxon>Oryza</taxon>
        <taxon>Oryza sativa</taxon>
    </lineage>
</organism>
<keyword id="KW-1185">Reference proteome</keyword>
<keyword id="KW-0677">Repeat</keyword>
<keyword id="KW-0694">RNA-binding</keyword>
<protein>
    <recommendedName>
        <fullName>Double-stranded RNA-binding protein 2</fullName>
    </recommendedName>
    <alternativeName>
        <fullName>dsRNA-binding protein 2</fullName>
    </alternativeName>
    <alternativeName>
        <fullName>dsRNA-binding protein 3</fullName>
        <shortName>OsDRB3</shortName>
    </alternativeName>
</protein>
<gene>
    <name type="primary">DRB2</name>
    <name type="synonym">DRB3</name>
    <name type="ordered locus">Os05g0150400</name>
    <name type="ordered locus">LOC_Os05g05790</name>
    <name type="ORF">P0001A07.3</name>
</gene>
<reference key="1">
    <citation type="journal article" date="2005" name="Mol. Genet. Genomics">
        <title>A fine physical map of the rice chromosome 5.</title>
        <authorList>
            <person name="Cheng C.-H."/>
            <person name="Chung M.C."/>
            <person name="Liu S.-M."/>
            <person name="Chen S.-K."/>
            <person name="Kao F.Y."/>
            <person name="Lin S.-J."/>
            <person name="Hsiao S.-H."/>
            <person name="Tseng I.C."/>
            <person name="Hsing Y.-I.C."/>
            <person name="Wu H.-P."/>
            <person name="Chen C.-S."/>
            <person name="Shaw J.-F."/>
            <person name="Wu J."/>
            <person name="Matsumoto T."/>
            <person name="Sasaki T."/>
            <person name="Chen H.-C."/>
            <person name="Chow T.-Y."/>
        </authorList>
    </citation>
    <scope>NUCLEOTIDE SEQUENCE [LARGE SCALE GENOMIC DNA]</scope>
    <source>
        <strain>cv. Nipponbare</strain>
    </source>
</reference>
<reference key="2">
    <citation type="journal article" date="2005" name="Nature">
        <title>The map-based sequence of the rice genome.</title>
        <authorList>
            <consortium name="International rice genome sequencing project (IRGSP)"/>
        </authorList>
    </citation>
    <scope>NUCLEOTIDE SEQUENCE [LARGE SCALE GENOMIC DNA]</scope>
    <source>
        <strain>cv. Nipponbare</strain>
    </source>
</reference>
<reference key="3">
    <citation type="journal article" date="2008" name="Nucleic Acids Res.">
        <title>The rice annotation project database (RAP-DB): 2008 update.</title>
        <authorList>
            <consortium name="The rice annotation project (RAP)"/>
        </authorList>
    </citation>
    <scope>GENOME REANNOTATION</scope>
    <source>
        <strain>cv. Nipponbare</strain>
    </source>
</reference>
<reference key="4">
    <citation type="journal article" date="2013" name="Rice">
        <title>Improvement of the Oryza sativa Nipponbare reference genome using next generation sequence and optical map data.</title>
        <authorList>
            <person name="Kawahara Y."/>
            <person name="de la Bastide M."/>
            <person name="Hamilton J.P."/>
            <person name="Kanamori H."/>
            <person name="McCombie W.R."/>
            <person name="Ouyang S."/>
            <person name="Schwartz D.C."/>
            <person name="Tanaka T."/>
            <person name="Wu J."/>
            <person name="Zhou S."/>
            <person name="Childs K.L."/>
            <person name="Davidson R.M."/>
            <person name="Lin H."/>
            <person name="Quesada-Ocampo L."/>
            <person name="Vaillancourt B."/>
            <person name="Sakai H."/>
            <person name="Lee S.S."/>
            <person name="Kim J."/>
            <person name="Numa H."/>
            <person name="Itoh T."/>
            <person name="Buell C.R."/>
            <person name="Matsumoto T."/>
        </authorList>
    </citation>
    <scope>GENOME REANNOTATION</scope>
    <source>
        <strain>cv. Nipponbare</strain>
    </source>
</reference>
<reference key="5">
    <citation type="journal article" date="2003" name="Science">
        <title>Collection, mapping, and annotation of over 28,000 cDNA clones from japonica rice.</title>
        <authorList>
            <consortium name="The rice full-length cDNA consortium"/>
        </authorList>
    </citation>
    <scope>NUCLEOTIDE SEQUENCE [LARGE SCALE MRNA]</scope>
    <source>
        <strain>cv. Nipponbare</strain>
    </source>
</reference>
<sequence>MYKNQLQELAQRSCFNLPSYACIREGPDHAPRFKATVNFNGETFESPAFCSTLRLAEHAAAEVALNELSKRGPSSSLAAKVLDETGIYKNLLQETAHRAGLKLPVYTTIRSGPGHTPVFTCTVELAGMTFTGNPGKTKKQAQKNAAMAAWSELKQLPRVGEPSSSSCPPDHDDDDQEQIIVARTLASLNQTNGGKTPQQKEKQQSSNRPSSRRPSYPKSNASFYGRLHLQKHAYPSVPPEQAMYHMWHQVQATQQKPHFPMVPTMGSTGFPPPPTVLHMYPPPRGQFTMPSSQDGLGLIPCYPEASPVLPRYFSPYPASFVPRRPLPVNVHKIHEKRLVGADMVELPDAAVFSRYTAPDFSGTSENAVQDNKKEEYTESSPASEQESKSHTASSSATRSPSQQLESNQDIEIMGGLRLESKKPAEQPPESSPSRVNPVLLCETGQRHHYSSVRHGDPVHRNSPQISVATSPSPIRRGDPAHINIPQISVATPPECRSPRAQAPPRFGTRMPVNLPSSLYQQRPPWLAASVTIRTTIPVCSARPNVVNSSAGAAQPAVQILSASPRKEEPEARTNTSDTSNAATASSELNKLHI</sequence>
<feature type="chain" id="PRO_0000404679" description="Double-stranded RNA-binding protein 2">
    <location>
        <begin position="1"/>
        <end position="593"/>
    </location>
</feature>
<feature type="domain" description="DRBM 1" evidence="2">
    <location>
        <begin position="1"/>
        <end position="70"/>
    </location>
</feature>
<feature type="domain" description="DRBM 2" evidence="2">
    <location>
        <begin position="87"/>
        <end position="155"/>
    </location>
</feature>
<feature type="region of interest" description="Disordered" evidence="3">
    <location>
        <begin position="188"/>
        <end position="221"/>
    </location>
</feature>
<feature type="region of interest" description="Disordered" evidence="3">
    <location>
        <begin position="357"/>
        <end position="408"/>
    </location>
</feature>
<feature type="region of interest" description="Disordered" evidence="3">
    <location>
        <begin position="546"/>
        <end position="593"/>
    </location>
</feature>
<feature type="compositionally biased region" description="Polar residues" evidence="3">
    <location>
        <begin position="188"/>
        <end position="197"/>
    </location>
</feature>
<feature type="compositionally biased region" description="Low complexity" evidence="3">
    <location>
        <begin position="205"/>
        <end position="219"/>
    </location>
</feature>
<feature type="compositionally biased region" description="Polar residues" evidence="3">
    <location>
        <begin position="378"/>
        <end position="408"/>
    </location>
</feature>
<feature type="compositionally biased region" description="Low complexity" evidence="3">
    <location>
        <begin position="572"/>
        <end position="586"/>
    </location>
</feature>
<comment type="function">
    <text evidence="1">Binds double-stranded RNA.</text>
</comment>
<comment type="sequence caution" evidence="4">
    <conflict type="erroneous gene model prediction">
        <sequence resource="EMBL-CDS" id="AAV32195"/>
    </conflict>
</comment>
<comment type="sequence caution" evidence="4">
    <conflict type="frameshift">
        <sequence resource="EMBL" id="AK110983"/>
    </conflict>
</comment>
<evidence type="ECO:0000250" key="1"/>
<evidence type="ECO:0000255" key="2">
    <source>
        <dbReference type="PROSITE-ProRule" id="PRU00266"/>
    </source>
</evidence>
<evidence type="ECO:0000256" key="3">
    <source>
        <dbReference type="SAM" id="MobiDB-lite"/>
    </source>
</evidence>
<evidence type="ECO:0000305" key="4"/>
<dbReference type="EMBL" id="AC084218">
    <property type="protein sequence ID" value="AAV32195.1"/>
    <property type="status" value="ALT_SEQ"/>
    <property type="molecule type" value="Genomic_DNA"/>
</dbReference>
<dbReference type="EMBL" id="AP008211">
    <property type="protein sequence ID" value="BAF16579.1"/>
    <property type="molecule type" value="Genomic_DNA"/>
</dbReference>
<dbReference type="EMBL" id="AP014961">
    <property type="status" value="NOT_ANNOTATED_CDS"/>
    <property type="molecule type" value="Genomic_DNA"/>
</dbReference>
<dbReference type="EMBL" id="AK110983">
    <property type="status" value="NOT_ANNOTATED_CDS"/>
    <property type="molecule type" value="mRNA"/>
</dbReference>
<dbReference type="RefSeq" id="XP_015639382.1">
    <property type="nucleotide sequence ID" value="XM_015783896.1"/>
</dbReference>
<dbReference type="RefSeq" id="XP_015639383.1">
    <property type="nucleotide sequence ID" value="XM_015783897.1"/>
</dbReference>
<dbReference type="RefSeq" id="XP_015639384.1">
    <property type="nucleotide sequence ID" value="XM_015783898.1"/>
</dbReference>
<dbReference type="SMR" id="Q0DKP4"/>
<dbReference type="FunCoup" id="Q0DKP4">
    <property type="interactions" value="125"/>
</dbReference>
<dbReference type="STRING" id="39947.Q0DKP4"/>
<dbReference type="PaxDb" id="39947-Q0DKP4"/>
<dbReference type="KEGG" id="dosa:Os05g0150400"/>
<dbReference type="eggNOG" id="ENOG502QTBA">
    <property type="taxonomic scope" value="Eukaryota"/>
</dbReference>
<dbReference type="HOGENOM" id="CLU_017946_1_0_1"/>
<dbReference type="InParanoid" id="Q0DKP4"/>
<dbReference type="OrthoDB" id="5988181at2759"/>
<dbReference type="Proteomes" id="UP000000763">
    <property type="component" value="Chromosome 5"/>
</dbReference>
<dbReference type="Proteomes" id="UP000059680">
    <property type="component" value="Chromosome 5"/>
</dbReference>
<dbReference type="GO" id="GO:0003725">
    <property type="term" value="F:double-stranded RNA binding"/>
    <property type="evidence" value="ECO:0007669"/>
    <property type="project" value="InterPro"/>
</dbReference>
<dbReference type="CDD" id="cd19907">
    <property type="entry name" value="DSRM_AtDRB-like_rpt1"/>
    <property type="match status" value="1"/>
</dbReference>
<dbReference type="CDD" id="cd19908">
    <property type="entry name" value="DSRM_AtDRB-like_rpt2"/>
    <property type="match status" value="1"/>
</dbReference>
<dbReference type="FunFam" id="3.30.160.20:FF:000036">
    <property type="entry name" value="Double-stranded RNA-binding protein 2"/>
    <property type="match status" value="2"/>
</dbReference>
<dbReference type="Gene3D" id="3.30.160.20">
    <property type="match status" value="2"/>
</dbReference>
<dbReference type="InterPro" id="IPR044450">
    <property type="entry name" value="AtDRB-like_DSRM_1"/>
</dbReference>
<dbReference type="InterPro" id="IPR044451">
    <property type="entry name" value="AtDRB-like_DSRM_2"/>
</dbReference>
<dbReference type="InterPro" id="IPR014720">
    <property type="entry name" value="dsRBD_dom"/>
</dbReference>
<dbReference type="PANTHER" id="PTHR46031">
    <property type="match status" value="1"/>
</dbReference>
<dbReference type="PANTHER" id="PTHR46031:SF2">
    <property type="entry name" value="DOUBLE-STRANDED RNA-BINDING PROTEIN 2"/>
    <property type="match status" value="1"/>
</dbReference>
<dbReference type="Pfam" id="PF00035">
    <property type="entry name" value="dsrm"/>
    <property type="match status" value="2"/>
</dbReference>
<dbReference type="SMART" id="SM00358">
    <property type="entry name" value="DSRM"/>
    <property type="match status" value="2"/>
</dbReference>
<dbReference type="SUPFAM" id="SSF54768">
    <property type="entry name" value="dsRNA-binding domain-like"/>
    <property type="match status" value="2"/>
</dbReference>
<dbReference type="PROSITE" id="PS50137">
    <property type="entry name" value="DS_RBD"/>
    <property type="match status" value="2"/>
</dbReference>
<name>DRB2_ORYSJ</name>
<proteinExistence type="evidence at transcript level"/>